<evidence type="ECO:0000255" key="1">
    <source>
        <dbReference type="HAMAP-Rule" id="MF_00150"/>
    </source>
</evidence>
<proteinExistence type="inferred from homology"/>
<organism>
    <name type="scientific">Streptococcus thermophilus (strain ATCC BAA-491 / LMD-9)</name>
    <dbReference type="NCBI Taxonomy" id="322159"/>
    <lineage>
        <taxon>Bacteria</taxon>
        <taxon>Bacillati</taxon>
        <taxon>Bacillota</taxon>
        <taxon>Bacilli</taxon>
        <taxon>Lactobacillales</taxon>
        <taxon>Streptococcaceae</taxon>
        <taxon>Streptococcus</taxon>
    </lineage>
</organism>
<sequence length="340" mass="37441">MKVSIVGITGYSGLELVKILNNHKKVELVSIHATKEVGRRLSDVYPYLAGVCDLKIEDFNAQEIIEKADLVFFATPSGVASSLAEEFVQADFPIIDLSGDHRLPADVYQEWYKKSPAKKMILNKFTYALSEYTDVKGKKFIANPGCYATATELALIPLVAAGLIETDSIIVDAKSGLTGAGKALSESSHFVNVHDNYMTYKLNHHQHIPEIVQTLQAFDADMPEIQFSTSLLPVNRGIMATVYCKLKKDVAVSDIASAFAKAYDDKPFVRVQENLPELHNVIGSNFTDIGFAYNEKTNVMTVISVIDNLLKGASGQAVQNLNLMQGWDETEGLHMTPSYL</sequence>
<gene>
    <name evidence="1" type="primary">argC</name>
    <name type="ordered locus">STER_0500</name>
</gene>
<name>ARGC_STRTD</name>
<keyword id="KW-0028">Amino-acid biosynthesis</keyword>
<keyword id="KW-0055">Arginine biosynthesis</keyword>
<keyword id="KW-0963">Cytoplasm</keyword>
<keyword id="KW-0521">NADP</keyword>
<keyword id="KW-0560">Oxidoreductase</keyword>
<comment type="function">
    <text evidence="1">Catalyzes the NADPH-dependent reduction of N-acetyl-5-glutamyl phosphate to yield N-acetyl-L-glutamate 5-semialdehyde.</text>
</comment>
<comment type="catalytic activity">
    <reaction evidence="1">
        <text>N-acetyl-L-glutamate 5-semialdehyde + phosphate + NADP(+) = N-acetyl-L-glutamyl 5-phosphate + NADPH + H(+)</text>
        <dbReference type="Rhea" id="RHEA:21588"/>
        <dbReference type="ChEBI" id="CHEBI:15378"/>
        <dbReference type="ChEBI" id="CHEBI:29123"/>
        <dbReference type="ChEBI" id="CHEBI:43474"/>
        <dbReference type="ChEBI" id="CHEBI:57783"/>
        <dbReference type="ChEBI" id="CHEBI:57936"/>
        <dbReference type="ChEBI" id="CHEBI:58349"/>
        <dbReference type="EC" id="1.2.1.38"/>
    </reaction>
</comment>
<comment type="pathway">
    <text evidence="1">Amino-acid biosynthesis; L-arginine biosynthesis; N(2)-acetyl-L-ornithine from L-glutamate: step 3/4.</text>
</comment>
<comment type="subcellular location">
    <subcellularLocation>
        <location evidence="1">Cytoplasm</location>
    </subcellularLocation>
</comment>
<comment type="similarity">
    <text evidence="1">Belongs to the NAGSA dehydrogenase family. Type 1 subfamily.</text>
</comment>
<feature type="chain" id="PRO_1000011070" description="N-acetyl-gamma-glutamyl-phosphate reductase">
    <location>
        <begin position="1"/>
        <end position="340"/>
    </location>
</feature>
<feature type="active site" evidence="1">
    <location>
        <position position="146"/>
    </location>
</feature>
<reference key="1">
    <citation type="journal article" date="2006" name="Proc. Natl. Acad. Sci. U.S.A.">
        <title>Comparative genomics of the lactic acid bacteria.</title>
        <authorList>
            <person name="Makarova K.S."/>
            <person name="Slesarev A."/>
            <person name="Wolf Y.I."/>
            <person name="Sorokin A."/>
            <person name="Mirkin B."/>
            <person name="Koonin E.V."/>
            <person name="Pavlov A."/>
            <person name="Pavlova N."/>
            <person name="Karamychev V."/>
            <person name="Polouchine N."/>
            <person name="Shakhova V."/>
            <person name="Grigoriev I."/>
            <person name="Lou Y."/>
            <person name="Rohksar D."/>
            <person name="Lucas S."/>
            <person name="Huang K."/>
            <person name="Goodstein D.M."/>
            <person name="Hawkins T."/>
            <person name="Plengvidhya V."/>
            <person name="Welker D."/>
            <person name="Hughes J."/>
            <person name="Goh Y."/>
            <person name="Benson A."/>
            <person name="Baldwin K."/>
            <person name="Lee J.-H."/>
            <person name="Diaz-Muniz I."/>
            <person name="Dosti B."/>
            <person name="Smeianov V."/>
            <person name="Wechter W."/>
            <person name="Barabote R."/>
            <person name="Lorca G."/>
            <person name="Altermann E."/>
            <person name="Barrangou R."/>
            <person name="Ganesan B."/>
            <person name="Xie Y."/>
            <person name="Rawsthorne H."/>
            <person name="Tamir D."/>
            <person name="Parker C."/>
            <person name="Breidt F."/>
            <person name="Broadbent J.R."/>
            <person name="Hutkins R."/>
            <person name="O'Sullivan D."/>
            <person name="Steele J."/>
            <person name="Unlu G."/>
            <person name="Saier M.H. Jr."/>
            <person name="Klaenhammer T."/>
            <person name="Richardson P."/>
            <person name="Kozyavkin S."/>
            <person name="Weimer B.C."/>
            <person name="Mills D.A."/>
        </authorList>
    </citation>
    <scope>NUCLEOTIDE SEQUENCE [LARGE SCALE GENOMIC DNA]</scope>
    <source>
        <strain>ATCC BAA-491 / LMD-9</strain>
    </source>
</reference>
<protein>
    <recommendedName>
        <fullName evidence="1">N-acetyl-gamma-glutamyl-phosphate reductase</fullName>
        <shortName evidence="1">AGPR</shortName>
        <ecNumber evidence="1">1.2.1.38</ecNumber>
    </recommendedName>
    <alternativeName>
        <fullName evidence="1">N-acetyl-glutamate semialdehyde dehydrogenase</fullName>
        <shortName evidence="1">NAGSA dehydrogenase</shortName>
    </alternativeName>
</protein>
<accession>Q03LZ4</accession>
<dbReference type="EC" id="1.2.1.38" evidence="1"/>
<dbReference type="EMBL" id="CP000419">
    <property type="protein sequence ID" value="ABJ65778.1"/>
    <property type="molecule type" value="Genomic_DNA"/>
</dbReference>
<dbReference type="RefSeq" id="WP_002949909.1">
    <property type="nucleotide sequence ID" value="NC_008532.1"/>
</dbReference>
<dbReference type="SMR" id="Q03LZ4"/>
<dbReference type="KEGG" id="ste:STER_0500"/>
<dbReference type="HOGENOM" id="CLU_006384_0_1_9"/>
<dbReference type="UniPathway" id="UPA00068">
    <property type="reaction ID" value="UER00108"/>
</dbReference>
<dbReference type="GO" id="GO:0005737">
    <property type="term" value="C:cytoplasm"/>
    <property type="evidence" value="ECO:0007669"/>
    <property type="project" value="UniProtKB-SubCell"/>
</dbReference>
<dbReference type="GO" id="GO:0003942">
    <property type="term" value="F:N-acetyl-gamma-glutamyl-phosphate reductase activity"/>
    <property type="evidence" value="ECO:0007669"/>
    <property type="project" value="UniProtKB-UniRule"/>
</dbReference>
<dbReference type="GO" id="GO:0051287">
    <property type="term" value="F:NAD binding"/>
    <property type="evidence" value="ECO:0007669"/>
    <property type="project" value="InterPro"/>
</dbReference>
<dbReference type="GO" id="GO:0070401">
    <property type="term" value="F:NADP+ binding"/>
    <property type="evidence" value="ECO:0007669"/>
    <property type="project" value="InterPro"/>
</dbReference>
<dbReference type="GO" id="GO:0006526">
    <property type="term" value="P:L-arginine biosynthetic process"/>
    <property type="evidence" value="ECO:0007669"/>
    <property type="project" value="UniProtKB-UniRule"/>
</dbReference>
<dbReference type="CDD" id="cd23934">
    <property type="entry name" value="AGPR_1_C"/>
    <property type="match status" value="1"/>
</dbReference>
<dbReference type="CDD" id="cd17895">
    <property type="entry name" value="AGPR_1_N"/>
    <property type="match status" value="1"/>
</dbReference>
<dbReference type="FunFam" id="3.30.360.10:FF:000014">
    <property type="entry name" value="N-acetyl-gamma-glutamyl-phosphate reductase"/>
    <property type="match status" value="1"/>
</dbReference>
<dbReference type="Gene3D" id="3.30.360.10">
    <property type="entry name" value="Dihydrodipicolinate Reductase, domain 2"/>
    <property type="match status" value="1"/>
</dbReference>
<dbReference type="Gene3D" id="3.40.50.720">
    <property type="entry name" value="NAD(P)-binding Rossmann-like Domain"/>
    <property type="match status" value="1"/>
</dbReference>
<dbReference type="HAMAP" id="MF_00150">
    <property type="entry name" value="ArgC_type1"/>
    <property type="match status" value="1"/>
</dbReference>
<dbReference type="InterPro" id="IPR023013">
    <property type="entry name" value="AGPR_AS"/>
</dbReference>
<dbReference type="InterPro" id="IPR000706">
    <property type="entry name" value="AGPR_type-1"/>
</dbReference>
<dbReference type="InterPro" id="IPR036291">
    <property type="entry name" value="NAD(P)-bd_dom_sf"/>
</dbReference>
<dbReference type="InterPro" id="IPR050085">
    <property type="entry name" value="NAGSA_dehydrogenase"/>
</dbReference>
<dbReference type="InterPro" id="IPR000534">
    <property type="entry name" value="Semialdehyde_DH_NAD-bd"/>
</dbReference>
<dbReference type="NCBIfam" id="TIGR01850">
    <property type="entry name" value="argC"/>
    <property type="match status" value="1"/>
</dbReference>
<dbReference type="PANTHER" id="PTHR32338:SF10">
    <property type="entry name" value="N-ACETYL-GAMMA-GLUTAMYL-PHOSPHATE REDUCTASE, CHLOROPLASTIC-RELATED"/>
    <property type="match status" value="1"/>
</dbReference>
<dbReference type="PANTHER" id="PTHR32338">
    <property type="entry name" value="N-ACETYL-GAMMA-GLUTAMYL-PHOSPHATE REDUCTASE, CHLOROPLASTIC-RELATED-RELATED"/>
    <property type="match status" value="1"/>
</dbReference>
<dbReference type="Pfam" id="PF01118">
    <property type="entry name" value="Semialdhyde_dh"/>
    <property type="match status" value="1"/>
</dbReference>
<dbReference type="Pfam" id="PF22698">
    <property type="entry name" value="Semialdhyde_dhC_1"/>
    <property type="match status" value="1"/>
</dbReference>
<dbReference type="SMART" id="SM00859">
    <property type="entry name" value="Semialdhyde_dh"/>
    <property type="match status" value="1"/>
</dbReference>
<dbReference type="SUPFAM" id="SSF55347">
    <property type="entry name" value="Glyceraldehyde-3-phosphate dehydrogenase-like, C-terminal domain"/>
    <property type="match status" value="1"/>
</dbReference>
<dbReference type="SUPFAM" id="SSF51735">
    <property type="entry name" value="NAD(P)-binding Rossmann-fold domains"/>
    <property type="match status" value="1"/>
</dbReference>
<dbReference type="PROSITE" id="PS01224">
    <property type="entry name" value="ARGC"/>
    <property type="match status" value="1"/>
</dbReference>